<feature type="chain" id="PRO_1000017558" description="Large ribosomal subunit protein bL27">
    <location>
        <begin position="1"/>
        <end position="85"/>
    </location>
</feature>
<name>RL27_PSEAB</name>
<gene>
    <name evidence="1" type="primary">rpmA</name>
    <name type="ordered locus">PA14_60450</name>
</gene>
<reference key="1">
    <citation type="journal article" date="2006" name="Genome Biol.">
        <title>Genomic analysis reveals that Pseudomonas aeruginosa virulence is combinatorial.</title>
        <authorList>
            <person name="Lee D.G."/>
            <person name="Urbach J.M."/>
            <person name="Wu G."/>
            <person name="Liberati N.T."/>
            <person name="Feinbaum R.L."/>
            <person name="Miyata S."/>
            <person name="Diggins L.T."/>
            <person name="He J."/>
            <person name="Saucier M."/>
            <person name="Deziel E."/>
            <person name="Friedman L."/>
            <person name="Li L."/>
            <person name="Grills G."/>
            <person name="Montgomery K."/>
            <person name="Kucherlapati R."/>
            <person name="Rahme L.G."/>
            <person name="Ausubel F.M."/>
        </authorList>
    </citation>
    <scope>NUCLEOTIDE SEQUENCE [LARGE SCALE GENOMIC DNA]</scope>
    <source>
        <strain>UCBPP-PA14</strain>
    </source>
</reference>
<keyword id="KW-0687">Ribonucleoprotein</keyword>
<keyword id="KW-0689">Ribosomal protein</keyword>
<dbReference type="EMBL" id="CP000438">
    <property type="protein sequence ID" value="ABJ13945.1"/>
    <property type="molecule type" value="Genomic_DNA"/>
</dbReference>
<dbReference type="RefSeq" id="WP_003094760.1">
    <property type="nucleotide sequence ID" value="NZ_CP034244.1"/>
</dbReference>
<dbReference type="SMR" id="Q02GB0"/>
<dbReference type="GeneID" id="77223074"/>
<dbReference type="KEGG" id="pau:PA14_60450"/>
<dbReference type="PseudoCAP" id="PA14_60450"/>
<dbReference type="HOGENOM" id="CLU_095424_4_1_6"/>
<dbReference type="BioCyc" id="PAER208963:G1G74-5111-MONOMER"/>
<dbReference type="Proteomes" id="UP000000653">
    <property type="component" value="Chromosome"/>
</dbReference>
<dbReference type="GO" id="GO:0022625">
    <property type="term" value="C:cytosolic large ribosomal subunit"/>
    <property type="evidence" value="ECO:0007669"/>
    <property type="project" value="TreeGrafter"/>
</dbReference>
<dbReference type="GO" id="GO:0003735">
    <property type="term" value="F:structural constituent of ribosome"/>
    <property type="evidence" value="ECO:0007669"/>
    <property type="project" value="InterPro"/>
</dbReference>
<dbReference type="GO" id="GO:0006412">
    <property type="term" value="P:translation"/>
    <property type="evidence" value="ECO:0007669"/>
    <property type="project" value="UniProtKB-UniRule"/>
</dbReference>
<dbReference type="FunFam" id="2.40.50.100:FF:000001">
    <property type="entry name" value="50S ribosomal protein L27"/>
    <property type="match status" value="1"/>
</dbReference>
<dbReference type="Gene3D" id="2.40.50.100">
    <property type="match status" value="1"/>
</dbReference>
<dbReference type="HAMAP" id="MF_00539">
    <property type="entry name" value="Ribosomal_bL27"/>
    <property type="match status" value="1"/>
</dbReference>
<dbReference type="InterPro" id="IPR001684">
    <property type="entry name" value="Ribosomal_bL27"/>
</dbReference>
<dbReference type="InterPro" id="IPR018261">
    <property type="entry name" value="Ribosomal_bL27_CS"/>
</dbReference>
<dbReference type="NCBIfam" id="TIGR00062">
    <property type="entry name" value="L27"/>
    <property type="match status" value="1"/>
</dbReference>
<dbReference type="PANTHER" id="PTHR15893:SF0">
    <property type="entry name" value="LARGE RIBOSOMAL SUBUNIT PROTEIN BL27M"/>
    <property type="match status" value="1"/>
</dbReference>
<dbReference type="PANTHER" id="PTHR15893">
    <property type="entry name" value="RIBOSOMAL PROTEIN L27"/>
    <property type="match status" value="1"/>
</dbReference>
<dbReference type="Pfam" id="PF01016">
    <property type="entry name" value="Ribosomal_L27"/>
    <property type="match status" value="1"/>
</dbReference>
<dbReference type="PRINTS" id="PR00063">
    <property type="entry name" value="RIBOSOMALL27"/>
</dbReference>
<dbReference type="SUPFAM" id="SSF110324">
    <property type="entry name" value="Ribosomal L27 protein-like"/>
    <property type="match status" value="1"/>
</dbReference>
<dbReference type="PROSITE" id="PS00831">
    <property type="entry name" value="RIBOSOMAL_L27"/>
    <property type="match status" value="1"/>
</dbReference>
<proteinExistence type="inferred from homology"/>
<accession>Q02GB0</accession>
<comment type="similarity">
    <text evidence="1">Belongs to the bacterial ribosomal protein bL27 family.</text>
</comment>
<sequence length="85" mass="8990">MAHKKAGGSTRNGRDSESKRLGVKLFGGQAVKAGNILVRQRGTKFHAGYGVGLGKDHTLFAKVDGVVKFETKGAFGRKYVSIVAA</sequence>
<protein>
    <recommendedName>
        <fullName evidence="1">Large ribosomal subunit protein bL27</fullName>
    </recommendedName>
    <alternativeName>
        <fullName evidence="2">50S ribosomal protein L27</fullName>
    </alternativeName>
</protein>
<evidence type="ECO:0000255" key="1">
    <source>
        <dbReference type="HAMAP-Rule" id="MF_00539"/>
    </source>
</evidence>
<evidence type="ECO:0000305" key="2"/>
<organism>
    <name type="scientific">Pseudomonas aeruginosa (strain UCBPP-PA14)</name>
    <dbReference type="NCBI Taxonomy" id="208963"/>
    <lineage>
        <taxon>Bacteria</taxon>
        <taxon>Pseudomonadati</taxon>
        <taxon>Pseudomonadota</taxon>
        <taxon>Gammaproteobacteria</taxon>
        <taxon>Pseudomonadales</taxon>
        <taxon>Pseudomonadaceae</taxon>
        <taxon>Pseudomonas</taxon>
    </lineage>
</organism>